<name>PKN1_MYXXA</name>
<comment type="function">
    <text>Plays an essential role in proper timing of early development events.</text>
</comment>
<comment type="catalytic activity">
    <reaction>
        <text>L-seryl-[protein] + ATP = O-phospho-L-seryl-[protein] + ADP + H(+)</text>
        <dbReference type="Rhea" id="RHEA:17989"/>
        <dbReference type="Rhea" id="RHEA-COMP:9863"/>
        <dbReference type="Rhea" id="RHEA-COMP:11604"/>
        <dbReference type="ChEBI" id="CHEBI:15378"/>
        <dbReference type="ChEBI" id="CHEBI:29999"/>
        <dbReference type="ChEBI" id="CHEBI:30616"/>
        <dbReference type="ChEBI" id="CHEBI:83421"/>
        <dbReference type="ChEBI" id="CHEBI:456216"/>
        <dbReference type="EC" id="2.7.11.1"/>
    </reaction>
</comment>
<comment type="catalytic activity">
    <reaction>
        <text>L-threonyl-[protein] + ATP = O-phospho-L-threonyl-[protein] + ADP + H(+)</text>
        <dbReference type="Rhea" id="RHEA:46608"/>
        <dbReference type="Rhea" id="RHEA-COMP:11060"/>
        <dbReference type="Rhea" id="RHEA-COMP:11605"/>
        <dbReference type="ChEBI" id="CHEBI:15378"/>
        <dbReference type="ChEBI" id="CHEBI:30013"/>
        <dbReference type="ChEBI" id="CHEBI:30616"/>
        <dbReference type="ChEBI" id="CHEBI:61977"/>
        <dbReference type="ChEBI" id="CHEBI:456216"/>
        <dbReference type="EC" id="2.7.11.1"/>
    </reaction>
</comment>
<comment type="activity regulation">
    <text>May be regulated by calcium or a calmodulin-like protein.</text>
</comment>
<comment type="developmental stage">
    <text>Developmentally regulated to start immediately before spore formation.</text>
</comment>
<comment type="PTM">
    <text>Autophosphorylated.</text>
</comment>
<comment type="similarity">
    <text evidence="1">Belongs to the protein kinase superfamily. Ser/Thr protein kinase family.</text>
</comment>
<evidence type="ECO:0000255" key="1">
    <source>
        <dbReference type="PROSITE-ProRule" id="PRU00159"/>
    </source>
</evidence>
<evidence type="ECO:0000255" key="2">
    <source>
        <dbReference type="PROSITE-ProRule" id="PRU10027"/>
    </source>
</evidence>
<dbReference type="EC" id="2.7.11.1"/>
<dbReference type="EMBL" id="M73498">
    <property type="protein sequence ID" value="AAA25402.1"/>
    <property type="molecule type" value="Genomic_DNA"/>
</dbReference>
<dbReference type="PIR" id="A41090">
    <property type="entry name" value="A41090"/>
</dbReference>
<dbReference type="SMR" id="P33973"/>
<dbReference type="BRENDA" id="2.7.11.10">
    <property type="organism ID" value="3551"/>
</dbReference>
<dbReference type="GO" id="GO:0005524">
    <property type="term" value="F:ATP binding"/>
    <property type="evidence" value="ECO:0007669"/>
    <property type="project" value="UniProtKB-KW"/>
</dbReference>
<dbReference type="GO" id="GO:0035438">
    <property type="term" value="F:cyclic-di-GMP binding"/>
    <property type="evidence" value="ECO:0007669"/>
    <property type="project" value="InterPro"/>
</dbReference>
<dbReference type="GO" id="GO:0106310">
    <property type="term" value="F:protein serine kinase activity"/>
    <property type="evidence" value="ECO:0007669"/>
    <property type="project" value="RHEA"/>
</dbReference>
<dbReference type="GO" id="GO:0004674">
    <property type="term" value="F:protein serine/threonine kinase activity"/>
    <property type="evidence" value="ECO:0007669"/>
    <property type="project" value="UniProtKB-KW"/>
</dbReference>
<dbReference type="CDD" id="cd14014">
    <property type="entry name" value="STKc_PknB_like"/>
    <property type="match status" value="1"/>
</dbReference>
<dbReference type="FunFam" id="1.10.510.10:FF:000021">
    <property type="entry name" value="Serine/threonine protein kinase"/>
    <property type="match status" value="1"/>
</dbReference>
<dbReference type="Gene3D" id="3.30.200.20">
    <property type="entry name" value="Phosphorylase Kinase, domain 1"/>
    <property type="match status" value="1"/>
</dbReference>
<dbReference type="Gene3D" id="2.40.10.220">
    <property type="entry name" value="predicted glycosyltransferase like domains"/>
    <property type="match status" value="1"/>
</dbReference>
<dbReference type="Gene3D" id="1.10.510.10">
    <property type="entry name" value="Transferase(Phosphotransferase) domain 1"/>
    <property type="match status" value="1"/>
</dbReference>
<dbReference type="InterPro" id="IPR011009">
    <property type="entry name" value="Kinase-like_dom_sf"/>
</dbReference>
<dbReference type="InterPro" id="IPR009875">
    <property type="entry name" value="PilZ_domain"/>
</dbReference>
<dbReference type="InterPro" id="IPR000719">
    <property type="entry name" value="Prot_kinase_dom"/>
</dbReference>
<dbReference type="InterPro" id="IPR017441">
    <property type="entry name" value="Protein_kinase_ATP_BS"/>
</dbReference>
<dbReference type="InterPro" id="IPR008271">
    <property type="entry name" value="Ser/Thr_kinase_AS"/>
</dbReference>
<dbReference type="InterPro" id="IPR019734">
    <property type="entry name" value="TPR_rpt"/>
</dbReference>
<dbReference type="PANTHER" id="PTHR43289">
    <property type="entry name" value="MITOGEN-ACTIVATED PROTEIN KINASE KINASE KINASE 20-RELATED"/>
    <property type="match status" value="1"/>
</dbReference>
<dbReference type="PANTHER" id="PTHR43289:SF6">
    <property type="entry name" value="SERINE_THREONINE-PROTEIN KINASE NEKL-3"/>
    <property type="match status" value="1"/>
</dbReference>
<dbReference type="Pfam" id="PF07238">
    <property type="entry name" value="PilZ"/>
    <property type="match status" value="1"/>
</dbReference>
<dbReference type="Pfam" id="PF00069">
    <property type="entry name" value="Pkinase"/>
    <property type="match status" value="1"/>
</dbReference>
<dbReference type="SMART" id="SM00220">
    <property type="entry name" value="S_TKc"/>
    <property type="match status" value="1"/>
</dbReference>
<dbReference type="SUPFAM" id="SSF56112">
    <property type="entry name" value="Protein kinase-like (PK-like)"/>
    <property type="match status" value="1"/>
</dbReference>
<dbReference type="PROSITE" id="PS00107">
    <property type="entry name" value="PROTEIN_KINASE_ATP"/>
    <property type="match status" value="1"/>
</dbReference>
<dbReference type="PROSITE" id="PS50011">
    <property type="entry name" value="PROTEIN_KINASE_DOM"/>
    <property type="match status" value="1"/>
</dbReference>
<dbReference type="PROSITE" id="PS00108">
    <property type="entry name" value="PROTEIN_KINASE_ST"/>
    <property type="match status" value="1"/>
</dbReference>
<dbReference type="PROSITE" id="PS50005">
    <property type="entry name" value="TPR"/>
    <property type="match status" value="1"/>
</dbReference>
<dbReference type="PROSITE" id="PS50293">
    <property type="entry name" value="TPR_REGION"/>
    <property type="match status" value="1"/>
</dbReference>
<gene>
    <name type="primary">pkn1</name>
</gene>
<keyword id="KW-0067">ATP-binding</keyword>
<keyword id="KW-0418">Kinase</keyword>
<keyword id="KW-0547">Nucleotide-binding</keyword>
<keyword id="KW-0597">Phosphoprotein</keyword>
<keyword id="KW-0723">Serine/threonine-protein kinase</keyword>
<keyword id="KW-0802">TPR repeat</keyword>
<keyword id="KW-0808">Transferase</keyword>
<reference key="1">
    <citation type="journal article" date="1991" name="Cell">
        <title>A gene encoding a protein serine/threonine kinase is required for normal development of M. xanthus, a Gram-negative bacterium.</title>
        <authorList>
            <person name="Munoz-Dorado J."/>
            <person name="Inouye S."/>
            <person name="Inouye M."/>
        </authorList>
    </citation>
    <scope>NUCLEOTIDE SEQUENCE [GENOMIC DNA]</scope>
    <source>
        <strain>DZF1</strain>
    </source>
</reference>
<protein>
    <recommendedName>
        <fullName>Serine/threonine-protein kinase Pkn1</fullName>
        <ecNumber>2.7.11.1</ecNumber>
    </recommendedName>
</protein>
<organism>
    <name type="scientific">Myxococcus xanthus</name>
    <dbReference type="NCBI Taxonomy" id="34"/>
    <lineage>
        <taxon>Bacteria</taxon>
        <taxon>Pseudomonadati</taxon>
        <taxon>Myxococcota</taxon>
        <taxon>Myxococcia</taxon>
        <taxon>Myxococcales</taxon>
        <taxon>Cystobacterineae</taxon>
        <taxon>Myxococcaceae</taxon>
        <taxon>Myxococcus</taxon>
    </lineage>
</organism>
<accession>P33973</accession>
<sequence length="693" mass="74173">MPEVSSGGGCGACGRRHGADASCPTLVRADVRAGGTAHPRCAPVVEAQDPLVGVRCGSFRLVRRLGRGGMGAVYLGEHVSIGSRVAVKVLHAHLTMYPELVQRFHAEARAVNLIGHENIVSIFDMDATPPRPYLIMEFLDGAPLSAWVGTPLAAGAVVSVLSQVCDALQAAHARGIVHRDLKPDNIFLVRRNGNAPFVKVLDFGIAKLADAHMPQTHAGIIVGTPEYMAPEQSLGRGVDGRADLYALGVIAYQLLTGRLPFNDEGLAAQLVAHQLRPPPPPSSVYPAVSAALEHVILRALAKKPEDRYASIAAFRNALQVALAEHVRVSARKTRPGGLAVLERAPVAPDMPTEGQSRGRLGVDARAGHVPSSLASTSQRRLAPAAPAVPRASLVEVPVQVVLRPGESPVRLRGSGLSRGGLFLHGGRVLPPLCSRLPVVLELASGPLSVMCEVVRVVPPAQARVWGMPTGFGVQFVEATAVLKAAVDALLQGEPVRAVPQVPLTEDPAVARLLEAWRQRSAGDAYAVLALEPDSDMGTVRLRTREAWRSLESLEQHSLTPPQRAQVDALRVRVREAAEALGATVQRALYDAWRGNHRGVAKCLEAGLTAEQLESLRREFLARRPQAMGTARSHFQSGGALERDGQLSQALDQYERGLKLAPLEVDMLQRYRRLRRVLGGRATAPTGHDRARSP</sequence>
<feature type="chain" id="PRO_0000171227" description="Serine/threonine-protein kinase Pkn1">
    <location>
        <begin position="1"/>
        <end position="693"/>
    </location>
</feature>
<feature type="domain" description="Protein kinase" evidence="1">
    <location>
        <begin position="59"/>
        <end position="328"/>
    </location>
</feature>
<feature type="domain" description="PilZ">
    <location>
        <begin position="393"/>
        <end position="491"/>
    </location>
</feature>
<feature type="repeat" description="TPR">
    <location>
        <begin position="630"/>
        <end position="663"/>
    </location>
</feature>
<feature type="active site" description="Proton acceptor" evidence="1 2">
    <location>
        <position position="180"/>
    </location>
</feature>
<feature type="binding site" evidence="1">
    <location>
        <begin position="65"/>
        <end position="73"/>
    </location>
    <ligand>
        <name>ATP</name>
        <dbReference type="ChEBI" id="CHEBI:30616"/>
    </ligand>
</feature>
<feature type="binding site" evidence="1">
    <location>
        <position position="88"/>
    </location>
    <ligand>
        <name>ATP</name>
        <dbReference type="ChEBI" id="CHEBI:30616"/>
    </ligand>
</feature>
<feature type="mutagenesis site" description="Loss of ATP-binding.">
    <original>K</original>
    <variation>N</variation>
    <location>
        <position position="88"/>
    </location>
</feature>
<proteinExistence type="evidence at protein level"/>